<organism>
    <name type="scientific">Lactococcus lactis subsp. cremoris (strain MG1363)</name>
    <dbReference type="NCBI Taxonomy" id="416870"/>
    <lineage>
        <taxon>Bacteria</taxon>
        <taxon>Bacillati</taxon>
        <taxon>Bacillota</taxon>
        <taxon>Bacilli</taxon>
        <taxon>Lactobacillales</taxon>
        <taxon>Streptococcaceae</taxon>
        <taxon>Lactococcus</taxon>
        <taxon>Lactococcus cremoris subsp. cremoris</taxon>
    </lineage>
</organism>
<gene>
    <name evidence="4" type="primary">ptcB</name>
    <name evidence="7" type="ordered locus">llmg_0437</name>
</gene>
<proteinExistence type="evidence at protein level"/>
<feature type="chain" id="PRO_5002645555" description="PTS system galactose-specific EIIB component">
    <location>
        <begin position="1"/>
        <end position="108"/>
    </location>
</feature>
<feature type="domain" description="PTS EIIB type-3" evidence="2">
    <location>
        <begin position="3"/>
        <end position="108"/>
    </location>
</feature>
<feature type="active site" description="Phosphocysteine intermediate" evidence="1">
    <location>
        <position position="10"/>
    </location>
</feature>
<feature type="modified residue" description="Phosphocysteine; by EIIA" evidence="2">
    <location>
        <position position="10"/>
    </location>
</feature>
<keyword id="KW-0418">Kinase</keyword>
<keyword id="KW-0597">Phosphoprotein</keyword>
<keyword id="KW-0598">Phosphotransferase system</keyword>
<keyword id="KW-0762">Sugar transport</keyword>
<keyword id="KW-0808">Transferase</keyword>
<keyword id="KW-0813">Transport</keyword>
<comment type="function">
    <text evidence="1 3">The phosphoenolpyruvate-dependent sugar phosphotransferase system (sugar PTS), a major carbohydrate active transport system, catalyzes the phosphorylation of incoming sugar substrates concomitantly with their translocation across the cell membrane (By similarity). Involved in galactose transport with PtcA and Lmg_0963 (PubMed:30123211).</text>
</comment>
<comment type="catalytic activity">
    <reaction evidence="6">
        <text>N(pros)-phospho-L-histidyl-[protein] + D-galactose(out) = D-galactose 6-phosphate(in) + L-histidyl-[protein]</text>
        <dbReference type="Rhea" id="RHEA:49260"/>
        <dbReference type="Rhea" id="RHEA-COMP:9745"/>
        <dbReference type="Rhea" id="RHEA-COMP:9746"/>
        <dbReference type="ChEBI" id="CHEBI:4139"/>
        <dbReference type="ChEBI" id="CHEBI:29979"/>
        <dbReference type="ChEBI" id="CHEBI:64837"/>
        <dbReference type="ChEBI" id="CHEBI:91004"/>
        <dbReference type="EC" id="2.7.1.204"/>
    </reaction>
</comment>
<comment type="induction">
    <text evidence="3">Induced by growth on galactose.</text>
</comment>
<comment type="domain">
    <text evidence="2">The PTS EIIB type-3 domain is phosphorylated by phospho-EIIA on a cysteinyl residue. Then, it transfers the phosphoryl group to the sugar substrate concomitantly with the sugar uptake processed by the PTS EIIC type-3 domain.</text>
</comment>
<protein>
    <recommendedName>
        <fullName evidence="5">PTS system galactose-specific EIIB component</fullName>
    </recommendedName>
    <alternativeName>
        <fullName evidence="5">Galactose-specific phosphotransferase enzyme IIB component</fullName>
        <ecNumber evidence="6">2.7.1.204</ecNumber>
    </alternativeName>
</protein>
<evidence type="ECO:0000250" key="1">
    <source>
        <dbReference type="UniProtKB" id="P69795"/>
    </source>
</evidence>
<evidence type="ECO:0000255" key="2">
    <source>
        <dbReference type="PROSITE-ProRule" id="PRU00423"/>
    </source>
</evidence>
<evidence type="ECO:0000269" key="3">
    <source>
    </source>
</evidence>
<evidence type="ECO:0000303" key="4">
    <source>
    </source>
</evidence>
<evidence type="ECO:0000305" key="5"/>
<evidence type="ECO:0000305" key="6">
    <source>
    </source>
</evidence>
<evidence type="ECO:0000312" key="7">
    <source>
        <dbReference type="EMBL" id="CAL97041.1"/>
    </source>
</evidence>
<dbReference type="EC" id="2.7.1.204" evidence="6"/>
<dbReference type="EMBL" id="AM406671">
    <property type="protein sequence ID" value="CAL97041.1"/>
    <property type="molecule type" value="Genomic_DNA"/>
</dbReference>
<dbReference type="RefSeq" id="WP_011675488.1">
    <property type="nucleotide sequence ID" value="NC_009004.1"/>
</dbReference>
<dbReference type="SMR" id="A2RIE6"/>
<dbReference type="STRING" id="416870.llmg_0437"/>
<dbReference type="GeneID" id="61108737"/>
<dbReference type="KEGG" id="llm:llmg_0437"/>
<dbReference type="eggNOG" id="COG1440">
    <property type="taxonomic scope" value="Bacteria"/>
</dbReference>
<dbReference type="HOGENOM" id="CLU_147323_1_1_9"/>
<dbReference type="OrthoDB" id="9808134at2"/>
<dbReference type="PhylomeDB" id="A2RIE6"/>
<dbReference type="Proteomes" id="UP000000364">
    <property type="component" value="Chromosome"/>
</dbReference>
<dbReference type="GO" id="GO:0016301">
    <property type="term" value="F:kinase activity"/>
    <property type="evidence" value="ECO:0007669"/>
    <property type="project" value="UniProtKB-KW"/>
</dbReference>
<dbReference type="GO" id="GO:0008982">
    <property type="term" value="F:protein-N(PI)-phosphohistidine-sugar phosphotransferase activity"/>
    <property type="evidence" value="ECO:0007669"/>
    <property type="project" value="InterPro"/>
</dbReference>
<dbReference type="GO" id="GO:0009401">
    <property type="term" value="P:phosphoenolpyruvate-dependent sugar phosphotransferase system"/>
    <property type="evidence" value="ECO:0007669"/>
    <property type="project" value="UniProtKB-KW"/>
</dbReference>
<dbReference type="CDD" id="cd05564">
    <property type="entry name" value="PTS_IIB_chitobiose_lichenan"/>
    <property type="match status" value="1"/>
</dbReference>
<dbReference type="Gene3D" id="3.40.50.2300">
    <property type="match status" value="1"/>
</dbReference>
<dbReference type="InterPro" id="IPR036095">
    <property type="entry name" value="PTS_EIIB-like_sf"/>
</dbReference>
<dbReference type="InterPro" id="IPR003501">
    <property type="entry name" value="PTS_EIIB_2/3"/>
</dbReference>
<dbReference type="InterPro" id="IPR013012">
    <property type="entry name" value="PTS_EIIB_3"/>
</dbReference>
<dbReference type="InterPro" id="IPR051819">
    <property type="entry name" value="PTS_sugar-specific_EIIB"/>
</dbReference>
<dbReference type="PANTHER" id="PTHR34581">
    <property type="entry name" value="PTS SYSTEM N,N'-DIACETYLCHITOBIOSE-SPECIFIC EIIB COMPONENT"/>
    <property type="match status" value="1"/>
</dbReference>
<dbReference type="PANTHER" id="PTHR34581:SF2">
    <property type="entry name" value="PTS SYSTEM N,N'-DIACETYLCHITOBIOSE-SPECIFIC EIIB COMPONENT"/>
    <property type="match status" value="1"/>
</dbReference>
<dbReference type="Pfam" id="PF02302">
    <property type="entry name" value="PTS_IIB"/>
    <property type="match status" value="1"/>
</dbReference>
<dbReference type="SUPFAM" id="SSF52794">
    <property type="entry name" value="PTS system IIB component-like"/>
    <property type="match status" value="1"/>
</dbReference>
<dbReference type="PROSITE" id="PS51100">
    <property type="entry name" value="PTS_EIIB_TYPE_3"/>
    <property type="match status" value="1"/>
</dbReference>
<accession>A2RIE6</accession>
<name>PTCB_LACLM</name>
<reference key="1">
    <citation type="journal article" date="2007" name="J. Bacteriol.">
        <title>The complete genome sequence of the lactic acid bacterial paradigm Lactococcus lactis subsp. cremoris MG1363.</title>
        <authorList>
            <person name="Wegmann U."/>
            <person name="O'Connell-Motherway M."/>
            <person name="Zomer A."/>
            <person name="Buist G."/>
            <person name="Shearman C."/>
            <person name="Canchaya C."/>
            <person name="Ventura M."/>
            <person name="Goesmann A."/>
            <person name="Gasson M.J."/>
            <person name="Kuipers O.P."/>
            <person name="van Sinderen D."/>
            <person name="Kok J."/>
        </authorList>
    </citation>
    <scope>NUCLEOTIDE SEQUENCE [LARGE SCALE GENOMIC DNA]</scope>
    <source>
        <strain>MG1363</strain>
    </source>
</reference>
<reference key="2">
    <citation type="journal article" date="2018" name="Front. Microbiol.">
        <title>Further elucidation of galactose utilization in Lactococcus lactis MG1363.</title>
        <authorList>
            <person name="Solopova A."/>
            <person name="Bachmann H."/>
            <person name="Teusink B."/>
            <person name="Kok J."/>
            <person name="Kuipers O.P."/>
        </authorList>
    </citation>
    <scope>FUNCTION</scope>
    <scope>CATALYTIC ACTIVITY</scope>
    <scope>INDUCTION</scope>
    <source>
        <strain>MG1363</strain>
    </source>
</reference>
<sequence>MADKVIALACAAGMSTSLLVSKMQKAAAENGKDYEIFAKSTADIDNMLAGTGSPKPDVLLLGPQVAFMKGEVAKKAEIAGVPMDVIKMQDYGMMRGDKVLAAAENLMN</sequence>